<feature type="chain" id="PRO_1000009266" description="UPF0102 protein YraN">
    <location>
        <begin position="1"/>
        <end position="131"/>
    </location>
</feature>
<feature type="region of interest" description="Disordered" evidence="2">
    <location>
        <begin position="1"/>
        <end position="20"/>
    </location>
</feature>
<feature type="compositionally biased region" description="Polar residues" evidence="2">
    <location>
        <begin position="1"/>
        <end position="19"/>
    </location>
</feature>
<proteinExistence type="inferred from homology"/>
<keyword id="KW-1185">Reference proteome</keyword>
<accession>Q32BI4</accession>
<reference key="1">
    <citation type="journal article" date="2005" name="Nucleic Acids Res.">
        <title>Genome dynamics and diversity of Shigella species, the etiologic agents of bacillary dysentery.</title>
        <authorList>
            <person name="Yang F."/>
            <person name="Yang J."/>
            <person name="Zhang X."/>
            <person name="Chen L."/>
            <person name="Jiang Y."/>
            <person name="Yan Y."/>
            <person name="Tang X."/>
            <person name="Wang J."/>
            <person name="Xiong Z."/>
            <person name="Dong J."/>
            <person name="Xue Y."/>
            <person name="Zhu Y."/>
            <person name="Xu X."/>
            <person name="Sun L."/>
            <person name="Chen S."/>
            <person name="Nie H."/>
            <person name="Peng J."/>
            <person name="Xu J."/>
            <person name="Wang Y."/>
            <person name="Yuan Z."/>
            <person name="Wen Y."/>
            <person name="Yao Z."/>
            <person name="Shen Y."/>
            <person name="Qiang B."/>
            <person name="Hou Y."/>
            <person name="Yu J."/>
            <person name="Jin Q."/>
        </authorList>
    </citation>
    <scope>NUCLEOTIDE SEQUENCE [LARGE SCALE GENOMIC DNA]</scope>
    <source>
        <strain>Sd197</strain>
    </source>
</reference>
<gene>
    <name evidence="1" type="primary">yraN</name>
    <name type="ordered locus">SDY_3327</name>
</gene>
<dbReference type="EMBL" id="CP000034">
    <property type="protein sequence ID" value="ABB63321.1"/>
    <property type="molecule type" value="Genomic_DNA"/>
</dbReference>
<dbReference type="RefSeq" id="WP_000246855.1">
    <property type="nucleotide sequence ID" value="NC_007606.1"/>
</dbReference>
<dbReference type="RefSeq" id="YP_404812.1">
    <property type="nucleotide sequence ID" value="NC_007606.1"/>
</dbReference>
<dbReference type="SMR" id="Q32BI4"/>
<dbReference type="STRING" id="300267.SDY_3327"/>
<dbReference type="EnsemblBacteria" id="ABB63321">
    <property type="protein sequence ID" value="ABB63321"/>
    <property type="gene ID" value="SDY_3327"/>
</dbReference>
<dbReference type="KEGG" id="sdy:SDY_3327"/>
<dbReference type="PATRIC" id="fig|300267.13.peg.3980"/>
<dbReference type="HOGENOM" id="CLU_115353_1_0_6"/>
<dbReference type="Proteomes" id="UP000002716">
    <property type="component" value="Chromosome"/>
</dbReference>
<dbReference type="GO" id="GO:0003676">
    <property type="term" value="F:nucleic acid binding"/>
    <property type="evidence" value="ECO:0007669"/>
    <property type="project" value="InterPro"/>
</dbReference>
<dbReference type="CDD" id="cd20736">
    <property type="entry name" value="PoNe_Nuclease"/>
    <property type="match status" value="1"/>
</dbReference>
<dbReference type="Gene3D" id="3.40.1350.10">
    <property type="match status" value="1"/>
</dbReference>
<dbReference type="HAMAP" id="MF_00048">
    <property type="entry name" value="UPF0102"/>
    <property type="match status" value="1"/>
</dbReference>
<dbReference type="InterPro" id="IPR011335">
    <property type="entry name" value="Restrct_endonuc-II-like"/>
</dbReference>
<dbReference type="InterPro" id="IPR011856">
    <property type="entry name" value="tRNA_endonuc-like_dom_sf"/>
</dbReference>
<dbReference type="InterPro" id="IPR003509">
    <property type="entry name" value="UPF0102_YraN-like"/>
</dbReference>
<dbReference type="NCBIfam" id="NF009150">
    <property type="entry name" value="PRK12497.1-3"/>
    <property type="match status" value="1"/>
</dbReference>
<dbReference type="NCBIfam" id="TIGR00252">
    <property type="entry name" value="YraN family protein"/>
    <property type="match status" value="1"/>
</dbReference>
<dbReference type="PANTHER" id="PTHR34039">
    <property type="entry name" value="UPF0102 PROTEIN YRAN"/>
    <property type="match status" value="1"/>
</dbReference>
<dbReference type="PANTHER" id="PTHR34039:SF1">
    <property type="entry name" value="UPF0102 PROTEIN YRAN"/>
    <property type="match status" value="1"/>
</dbReference>
<dbReference type="Pfam" id="PF02021">
    <property type="entry name" value="UPF0102"/>
    <property type="match status" value="1"/>
</dbReference>
<dbReference type="SUPFAM" id="SSF52980">
    <property type="entry name" value="Restriction endonuclease-like"/>
    <property type="match status" value="1"/>
</dbReference>
<name>YRAN_SHIDS</name>
<sequence>MATVPTRSGSPRQLTTKQTGDAWEVQARRWLEGKGLRFVAANVNERGGEIDLIMREGRTTVFVEVRYRRSALYGGAAASVTRSKQHKLLQTARLWLARHNGSFDTVDCRFDVVAFTGNEVEWIKDAFNDHS</sequence>
<protein>
    <recommendedName>
        <fullName evidence="1">UPF0102 protein YraN</fullName>
    </recommendedName>
</protein>
<organism>
    <name type="scientific">Shigella dysenteriae serotype 1 (strain Sd197)</name>
    <dbReference type="NCBI Taxonomy" id="300267"/>
    <lineage>
        <taxon>Bacteria</taxon>
        <taxon>Pseudomonadati</taxon>
        <taxon>Pseudomonadota</taxon>
        <taxon>Gammaproteobacteria</taxon>
        <taxon>Enterobacterales</taxon>
        <taxon>Enterobacteriaceae</taxon>
        <taxon>Shigella</taxon>
    </lineage>
</organism>
<evidence type="ECO:0000255" key="1">
    <source>
        <dbReference type="HAMAP-Rule" id="MF_00048"/>
    </source>
</evidence>
<evidence type="ECO:0000256" key="2">
    <source>
        <dbReference type="SAM" id="MobiDB-lite"/>
    </source>
</evidence>
<comment type="similarity">
    <text evidence="1">Belongs to the UPF0102 family.</text>
</comment>